<feature type="chain" id="PRO_0000289348" description="Lipoprotein signal peptidase">
    <location>
        <begin position="1"/>
        <end position="179"/>
    </location>
</feature>
<feature type="transmembrane region" description="Helical" evidence="1">
    <location>
        <begin position="10"/>
        <end position="30"/>
    </location>
</feature>
<feature type="transmembrane region" description="Helical" evidence="1">
    <location>
        <begin position="48"/>
        <end position="68"/>
    </location>
</feature>
<feature type="transmembrane region" description="Helical" evidence="1">
    <location>
        <begin position="75"/>
        <end position="95"/>
    </location>
</feature>
<feature type="transmembrane region" description="Helical" evidence="1">
    <location>
        <begin position="101"/>
        <end position="121"/>
    </location>
</feature>
<feature type="transmembrane region" description="Helical" evidence="1">
    <location>
        <begin position="141"/>
        <end position="161"/>
    </location>
</feature>
<feature type="active site" evidence="1">
    <location>
        <position position="131"/>
    </location>
</feature>
<feature type="active site" evidence="1">
    <location>
        <position position="149"/>
    </location>
</feature>
<name>LSPA_ACIAD</name>
<reference key="1">
    <citation type="journal article" date="2004" name="Nucleic Acids Res.">
        <title>Unique features revealed by the genome sequence of Acinetobacter sp. ADP1, a versatile and naturally transformation competent bacterium.</title>
        <authorList>
            <person name="Barbe V."/>
            <person name="Vallenet D."/>
            <person name="Fonknechten N."/>
            <person name="Kreimeyer A."/>
            <person name="Oztas S."/>
            <person name="Labarre L."/>
            <person name="Cruveiller S."/>
            <person name="Robert C."/>
            <person name="Duprat S."/>
            <person name="Wincker P."/>
            <person name="Ornston L.N."/>
            <person name="Weissenbach J."/>
            <person name="Marliere P."/>
            <person name="Cohen G.N."/>
            <person name="Medigue C."/>
        </authorList>
    </citation>
    <scope>NUCLEOTIDE SEQUENCE [LARGE SCALE GENOMIC DNA]</scope>
    <source>
        <strain>ATCC 33305 / BD413 / ADP1</strain>
    </source>
</reference>
<sequence>MPKLEAKKGLFQFYPHNLIWLGLSILAIIIDQWTKWIASTHLNYADPVPVLPFLNWTLLHNYGAAFSFLSDAGGWQHYLFTGLAGIVSIIFIFWLMRMPKNAMILPAAIALILGGALGNLIDRMTLGYVVDFIHIYYQNHHFPAFNIADSAITIGTILLLIDTFFLEKQRIQRAEVKHD</sequence>
<gene>
    <name evidence="1" type="primary">lspA</name>
    <name type="ordered locus">ACIAD0021</name>
</gene>
<organism>
    <name type="scientific">Acinetobacter baylyi (strain ATCC 33305 / BD413 / ADP1)</name>
    <dbReference type="NCBI Taxonomy" id="62977"/>
    <lineage>
        <taxon>Bacteria</taxon>
        <taxon>Pseudomonadati</taxon>
        <taxon>Pseudomonadota</taxon>
        <taxon>Gammaproteobacteria</taxon>
        <taxon>Moraxellales</taxon>
        <taxon>Moraxellaceae</taxon>
        <taxon>Acinetobacter</taxon>
    </lineage>
</organism>
<proteinExistence type="inferred from homology"/>
<keyword id="KW-0064">Aspartyl protease</keyword>
<keyword id="KW-0997">Cell inner membrane</keyword>
<keyword id="KW-1003">Cell membrane</keyword>
<keyword id="KW-0378">Hydrolase</keyword>
<keyword id="KW-0472">Membrane</keyword>
<keyword id="KW-0645">Protease</keyword>
<keyword id="KW-0812">Transmembrane</keyword>
<keyword id="KW-1133">Transmembrane helix</keyword>
<dbReference type="EC" id="3.4.23.36" evidence="1"/>
<dbReference type="EMBL" id="CR543861">
    <property type="protein sequence ID" value="CAG67004.1"/>
    <property type="molecule type" value="Genomic_DNA"/>
</dbReference>
<dbReference type="RefSeq" id="WP_004930972.1">
    <property type="nucleotide sequence ID" value="NC_005966.1"/>
</dbReference>
<dbReference type="SMR" id="Q6FG03"/>
<dbReference type="STRING" id="202950.GCA_001485005_01769"/>
<dbReference type="GeneID" id="45232555"/>
<dbReference type="KEGG" id="aci:ACIAD0021"/>
<dbReference type="eggNOG" id="COG0597">
    <property type="taxonomic scope" value="Bacteria"/>
</dbReference>
<dbReference type="HOGENOM" id="CLU_083252_4_0_6"/>
<dbReference type="OrthoDB" id="9810259at2"/>
<dbReference type="BioCyc" id="ASP62977:ACIAD_RS00115-MONOMER"/>
<dbReference type="UniPathway" id="UPA00665"/>
<dbReference type="Proteomes" id="UP000000430">
    <property type="component" value="Chromosome"/>
</dbReference>
<dbReference type="GO" id="GO:0005886">
    <property type="term" value="C:plasma membrane"/>
    <property type="evidence" value="ECO:0007669"/>
    <property type="project" value="UniProtKB-SubCell"/>
</dbReference>
<dbReference type="GO" id="GO:0004190">
    <property type="term" value="F:aspartic-type endopeptidase activity"/>
    <property type="evidence" value="ECO:0007669"/>
    <property type="project" value="UniProtKB-UniRule"/>
</dbReference>
<dbReference type="GO" id="GO:0006508">
    <property type="term" value="P:proteolysis"/>
    <property type="evidence" value="ECO:0007669"/>
    <property type="project" value="UniProtKB-KW"/>
</dbReference>
<dbReference type="HAMAP" id="MF_00161">
    <property type="entry name" value="LspA"/>
    <property type="match status" value="1"/>
</dbReference>
<dbReference type="InterPro" id="IPR001872">
    <property type="entry name" value="Peptidase_A8"/>
</dbReference>
<dbReference type="NCBIfam" id="TIGR00077">
    <property type="entry name" value="lspA"/>
    <property type="match status" value="1"/>
</dbReference>
<dbReference type="PANTHER" id="PTHR33695">
    <property type="entry name" value="LIPOPROTEIN SIGNAL PEPTIDASE"/>
    <property type="match status" value="1"/>
</dbReference>
<dbReference type="PANTHER" id="PTHR33695:SF1">
    <property type="entry name" value="LIPOPROTEIN SIGNAL PEPTIDASE"/>
    <property type="match status" value="1"/>
</dbReference>
<dbReference type="Pfam" id="PF01252">
    <property type="entry name" value="Peptidase_A8"/>
    <property type="match status" value="1"/>
</dbReference>
<dbReference type="PRINTS" id="PR00781">
    <property type="entry name" value="LIPOSIGPTASE"/>
</dbReference>
<dbReference type="PROSITE" id="PS00855">
    <property type="entry name" value="SPASE_II"/>
    <property type="match status" value="1"/>
</dbReference>
<evidence type="ECO:0000255" key="1">
    <source>
        <dbReference type="HAMAP-Rule" id="MF_00161"/>
    </source>
</evidence>
<comment type="function">
    <text evidence="1">This protein specifically catalyzes the removal of signal peptides from prolipoproteins.</text>
</comment>
<comment type="catalytic activity">
    <reaction evidence="1">
        <text>Release of signal peptides from bacterial membrane prolipoproteins. Hydrolyzes -Xaa-Yaa-Zaa-|-(S,diacylglyceryl)Cys-, in which Xaa is hydrophobic (preferably Leu), and Yaa (Ala or Ser) and Zaa (Gly or Ala) have small, neutral side chains.</text>
        <dbReference type="EC" id="3.4.23.36"/>
    </reaction>
</comment>
<comment type="pathway">
    <text evidence="1">Protein modification; lipoprotein biosynthesis (signal peptide cleavage).</text>
</comment>
<comment type="subcellular location">
    <subcellularLocation>
        <location evidence="1">Cell inner membrane</location>
        <topology evidence="1">Multi-pass membrane protein</topology>
    </subcellularLocation>
</comment>
<comment type="similarity">
    <text evidence="1">Belongs to the peptidase A8 family.</text>
</comment>
<protein>
    <recommendedName>
        <fullName evidence="1">Lipoprotein signal peptidase</fullName>
        <ecNumber evidence="1">3.4.23.36</ecNumber>
    </recommendedName>
    <alternativeName>
        <fullName evidence="1">Prolipoprotein signal peptidase</fullName>
    </alternativeName>
    <alternativeName>
        <fullName evidence="1">Signal peptidase II</fullName>
        <shortName evidence="1">SPase II</shortName>
    </alternativeName>
</protein>
<accession>Q6FG03</accession>